<reference key="1">
    <citation type="journal article" date="1998" name="DNA Res.">
        <title>Complete sequence and gene organization of the genome of a hyper-thermophilic archaebacterium, Pyrococcus horikoshii OT3.</title>
        <authorList>
            <person name="Kawarabayasi Y."/>
            <person name="Sawada M."/>
            <person name="Horikawa H."/>
            <person name="Haikawa Y."/>
            <person name="Hino Y."/>
            <person name="Yamamoto S."/>
            <person name="Sekine M."/>
            <person name="Baba S."/>
            <person name="Kosugi H."/>
            <person name="Hosoyama A."/>
            <person name="Nagai Y."/>
            <person name="Sakai M."/>
            <person name="Ogura K."/>
            <person name="Otsuka R."/>
            <person name="Nakazawa H."/>
            <person name="Takamiya M."/>
            <person name="Ohfuku Y."/>
            <person name="Funahashi T."/>
            <person name="Tanaka T."/>
            <person name="Kudoh Y."/>
            <person name="Yamazaki J."/>
            <person name="Kushida N."/>
            <person name="Oguchi A."/>
            <person name="Aoki K."/>
            <person name="Yoshizawa T."/>
            <person name="Nakamura Y."/>
            <person name="Robb F.T."/>
            <person name="Horikoshi K."/>
            <person name="Masuchi Y."/>
            <person name="Shizuya H."/>
            <person name="Kikuchi H."/>
        </authorList>
    </citation>
    <scope>NUCLEOTIDE SEQUENCE [LARGE SCALE GENOMIC DNA]</scope>
    <source>
        <strain>ATCC 700860 / DSM 12428 / JCM 9974 / NBRC 100139 / OT-3</strain>
    </source>
</reference>
<name>RS14Z_PYRHO</name>
<keyword id="KW-0479">Metal-binding</keyword>
<keyword id="KW-0687">Ribonucleoprotein</keyword>
<keyword id="KW-0689">Ribosomal protein</keyword>
<keyword id="KW-0694">RNA-binding</keyword>
<keyword id="KW-0699">rRNA-binding</keyword>
<keyword id="KW-0862">Zinc</keyword>
<accession>P62013</accession>
<accession>O74093</accession>
<organism>
    <name type="scientific">Pyrococcus horikoshii (strain ATCC 700860 / DSM 12428 / JCM 9974 / NBRC 100139 / OT-3)</name>
    <dbReference type="NCBI Taxonomy" id="70601"/>
    <lineage>
        <taxon>Archaea</taxon>
        <taxon>Methanobacteriati</taxon>
        <taxon>Methanobacteriota</taxon>
        <taxon>Thermococci</taxon>
        <taxon>Thermococcales</taxon>
        <taxon>Thermococcaceae</taxon>
        <taxon>Pyrococcus</taxon>
    </lineage>
</organism>
<gene>
    <name evidence="1" type="primary">rps14</name>
    <name type="ordered locus">PH1764.1</name>
    <name type="ORF">PHS047</name>
</gene>
<feature type="chain" id="PRO_0000130997" description="Small ribosomal subunit protein uS14">
    <location>
        <begin position="1"/>
        <end position="56"/>
    </location>
</feature>
<feature type="binding site" evidence="1">
    <location>
        <position position="21"/>
    </location>
    <ligand>
        <name>Zn(2+)</name>
        <dbReference type="ChEBI" id="CHEBI:29105"/>
    </ligand>
</feature>
<feature type="binding site" evidence="1">
    <location>
        <position position="24"/>
    </location>
    <ligand>
        <name>Zn(2+)</name>
        <dbReference type="ChEBI" id="CHEBI:29105"/>
    </ligand>
</feature>
<feature type="binding site" evidence="1">
    <location>
        <position position="39"/>
    </location>
    <ligand>
        <name>Zn(2+)</name>
        <dbReference type="ChEBI" id="CHEBI:29105"/>
    </ligand>
</feature>
<feature type="binding site" evidence="1">
    <location>
        <position position="42"/>
    </location>
    <ligand>
        <name>Zn(2+)</name>
        <dbReference type="ChEBI" id="CHEBI:29105"/>
    </ligand>
</feature>
<evidence type="ECO:0000255" key="1">
    <source>
        <dbReference type="HAMAP-Rule" id="MF_01364"/>
    </source>
</evidence>
<evidence type="ECO:0000305" key="2"/>
<dbReference type="EMBL" id="BA000001">
    <property type="protein sequence ID" value="BAA30879.1"/>
    <property type="molecule type" value="Genomic_DNA"/>
</dbReference>
<dbReference type="PIR" id="H71185">
    <property type="entry name" value="H71185"/>
</dbReference>
<dbReference type="RefSeq" id="WP_010867449.1">
    <property type="nucleotide sequence ID" value="NC_000961.1"/>
</dbReference>
<dbReference type="SMR" id="P62013"/>
<dbReference type="STRING" id="70601.gene:9378762"/>
<dbReference type="EnsemblBacteria" id="BAA30879">
    <property type="protein sequence ID" value="BAA30879"/>
    <property type="gene ID" value="BAA30879"/>
</dbReference>
<dbReference type="KEGG" id="pho:PHS047"/>
<dbReference type="eggNOG" id="arCOG00782">
    <property type="taxonomic scope" value="Archaea"/>
</dbReference>
<dbReference type="OrthoDB" id="5615at2157"/>
<dbReference type="Proteomes" id="UP000000752">
    <property type="component" value="Chromosome"/>
</dbReference>
<dbReference type="GO" id="GO:0022627">
    <property type="term" value="C:cytosolic small ribosomal subunit"/>
    <property type="evidence" value="ECO:0007669"/>
    <property type="project" value="TreeGrafter"/>
</dbReference>
<dbReference type="GO" id="GO:0019843">
    <property type="term" value="F:rRNA binding"/>
    <property type="evidence" value="ECO:0007669"/>
    <property type="project" value="UniProtKB-UniRule"/>
</dbReference>
<dbReference type="GO" id="GO:0003735">
    <property type="term" value="F:structural constituent of ribosome"/>
    <property type="evidence" value="ECO:0007669"/>
    <property type="project" value="InterPro"/>
</dbReference>
<dbReference type="GO" id="GO:0008270">
    <property type="term" value="F:zinc ion binding"/>
    <property type="evidence" value="ECO:0007669"/>
    <property type="project" value="UniProtKB-UniRule"/>
</dbReference>
<dbReference type="GO" id="GO:0002181">
    <property type="term" value="P:cytoplasmic translation"/>
    <property type="evidence" value="ECO:0007669"/>
    <property type="project" value="TreeGrafter"/>
</dbReference>
<dbReference type="FunFam" id="4.10.830.10:FF:000002">
    <property type="entry name" value="40S ribosomal protein S29"/>
    <property type="match status" value="1"/>
</dbReference>
<dbReference type="Gene3D" id="4.10.830.10">
    <property type="entry name" value="30s Ribosomal Protein S14, Chain N"/>
    <property type="match status" value="1"/>
</dbReference>
<dbReference type="HAMAP" id="MF_01364_A">
    <property type="entry name" value="Ribosomal_uS14_2_A"/>
    <property type="match status" value="1"/>
</dbReference>
<dbReference type="InterPro" id="IPR001209">
    <property type="entry name" value="Ribosomal_uS14"/>
</dbReference>
<dbReference type="InterPro" id="IPR023676">
    <property type="entry name" value="Ribosomal_uS14_arc"/>
</dbReference>
<dbReference type="InterPro" id="IPR018271">
    <property type="entry name" value="Ribosomal_uS14_CS"/>
</dbReference>
<dbReference type="InterPro" id="IPR039744">
    <property type="entry name" value="RIbosomal_uS14_euk_arc"/>
</dbReference>
<dbReference type="InterPro" id="IPR043140">
    <property type="entry name" value="Ribosomal_uS14_sf"/>
</dbReference>
<dbReference type="NCBIfam" id="NF004424">
    <property type="entry name" value="PRK05766.1"/>
    <property type="match status" value="1"/>
</dbReference>
<dbReference type="PANTHER" id="PTHR12010">
    <property type="entry name" value="40S RIBOSOMAL PROTEIN S29"/>
    <property type="match status" value="1"/>
</dbReference>
<dbReference type="PANTHER" id="PTHR12010:SF2">
    <property type="entry name" value="40S RIBOSOMAL PROTEIN S29"/>
    <property type="match status" value="1"/>
</dbReference>
<dbReference type="Pfam" id="PF00253">
    <property type="entry name" value="Ribosomal_S14"/>
    <property type="match status" value="1"/>
</dbReference>
<dbReference type="PROSITE" id="PS00527">
    <property type="entry name" value="RIBOSOMAL_S14"/>
    <property type="match status" value="1"/>
</dbReference>
<comment type="function">
    <text evidence="1">Binds 16S rRNA, required for the assembly of 30S particles.</text>
</comment>
<comment type="cofactor">
    <cofactor evidence="1">
        <name>Zn(2+)</name>
        <dbReference type="ChEBI" id="CHEBI:29105"/>
    </cofactor>
    <text evidence="1">Binds 1 zinc ion per subunit.</text>
</comment>
<comment type="subunit">
    <text evidence="1">Part of the 30S ribosomal subunit.</text>
</comment>
<comment type="similarity">
    <text evidence="1">Belongs to the universal ribosomal protein uS14 family. Zinc-binding uS14 subfamily.</text>
</comment>
<proteinExistence type="inferred from homology"/>
<sequence>MAKADYNKRKPRKFGKGARRCIRCGQYGPIIRIHGLMLCRHCFREVAPKLGFRKYE</sequence>
<protein>
    <recommendedName>
        <fullName evidence="1">Small ribosomal subunit protein uS14</fullName>
    </recommendedName>
    <alternativeName>
        <fullName evidence="2">30S ribosomal protein S14 type Z</fullName>
    </alternativeName>
</protein>